<proteinExistence type="inferred from homology"/>
<evidence type="ECO:0000255" key="1"/>
<evidence type="ECO:0000255" key="2">
    <source>
        <dbReference type="PROSITE-ProRule" id="PRU00498"/>
    </source>
</evidence>
<evidence type="ECO:0000256" key="3">
    <source>
        <dbReference type="SAM" id="MobiDB-lite"/>
    </source>
</evidence>
<evidence type="ECO:0000305" key="4"/>
<keyword id="KW-0020">Allergen</keyword>
<keyword id="KW-0325">Glycoprotein</keyword>
<keyword id="KW-1185">Reference proteome</keyword>
<keyword id="KW-0964">Secreted</keyword>
<keyword id="KW-0732">Signal</keyword>
<feature type="signal peptide" evidence="1">
    <location>
        <begin position="1"/>
        <end position="20"/>
    </location>
</feature>
<feature type="chain" id="PRO_0000434432" description="Allergen Asp f 7 homolog" evidence="1">
    <location>
        <begin position="21"/>
        <end position="288"/>
    </location>
</feature>
<feature type="region of interest" description="Disordered" evidence="3">
    <location>
        <begin position="48"/>
        <end position="161"/>
    </location>
</feature>
<feature type="compositionally biased region" description="Low complexity" evidence="3">
    <location>
        <begin position="48"/>
        <end position="107"/>
    </location>
</feature>
<feature type="compositionally biased region" description="Low complexity" evidence="3">
    <location>
        <begin position="117"/>
        <end position="129"/>
    </location>
</feature>
<feature type="compositionally biased region" description="Pro residues" evidence="3">
    <location>
        <begin position="130"/>
        <end position="151"/>
    </location>
</feature>
<feature type="glycosylation site" description="N-linked (GlcNAc...) asparagine" evidence="2">
    <location>
        <position position="268"/>
    </location>
</feature>
<name>ALL7_ARTBC</name>
<protein>
    <recommendedName>
        <fullName evidence="4">Allergen Asp f 7 homolog</fullName>
    </recommendedName>
</protein>
<accession>D4B2H3</accession>
<reference key="1">
    <citation type="journal article" date="2011" name="Genome Biol.">
        <title>Comparative and functional genomics provide insights into the pathogenicity of dermatophytic fungi.</title>
        <authorList>
            <person name="Burmester A."/>
            <person name="Shelest E."/>
            <person name="Gloeckner G."/>
            <person name="Heddergott C."/>
            <person name="Schindler S."/>
            <person name="Staib P."/>
            <person name="Heidel A."/>
            <person name="Felder M."/>
            <person name="Petzold A."/>
            <person name="Szafranski K."/>
            <person name="Feuermann M."/>
            <person name="Pedruzzi I."/>
            <person name="Priebe S."/>
            <person name="Groth M."/>
            <person name="Winkler R."/>
            <person name="Li W."/>
            <person name="Kniemeyer O."/>
            <person name="Schroeckh V."/>
            <person name="Hertweck C."/>
            <person name="Hube B."/>
            <person name="White T.C."/>
            <person name="Platzer M."/>
            <person name="Guthke R."/>
            <person name="Heitman J."/>
            <person name="Woestemeyer J."/>
            <person name="Zipfel P.F."/>
            <person name="Monod M."/>
            <person name="Brakhage A.A."/>
        </authorList>
    </citation>
    <scope>NUCLEOTIDE SEQUENCE [LARGE SCALE GENOMIC DNA]</scope>
    <source>
        <strain>ATCC MYA-4681 / CBS 112371</strain>
    </source>
</reference>
<comment type="subcellular location">
    <subcellularLocation>
        <location evidence="4">Secreted</location>
    </subcellularLocation>
</comment>
<comment type="allergen">
    <text evidence="4">May cause an allergic reaction in human.</text>
</comment>
<organism>
    <name type="scientific">Arthroderma benhamiae (strain ATCC MYA-4681 / CBS 112371)</name>
    <name type="common">Trichophyton mentagrophytes</name>
    <dbReference type="NCBI Taxonomy" id="663331"/>
    <lineage>
        <taxon>Eukaryota</taxon>
        <taxon>Fungi</taxon>
        <taxon>Dikarya</taxon>
        <taxon>Ascomycota</taxon>
        <taxon>Pezizomycotina</taxon>
        <taxon>Eurotiomycetes</taxon>
        <taxon>Eurotiomycetidae</taxon>
        <taxon>Onygenales</taxon>
        <taxon>Arthrodermataceae</taxon>
        <taxon>Trichophyton</taxon>
    </lineage>
</organism>
<sequence>MAPQFLKALTVATALGATLATALPVQPKPTVWHTTTQVVVKTITKTATVHGTPGPDYTVPPAYTTPAAPTVPTDAPQQPSYTPVPSAPTPSSSSSYSAPAEPSSSSVPAPPPPPPTTTSTPAPEPTTSTTPPPPPPAMTTPPPPPPPPATKPPVVSIPPIGGGGSTYTGPCAAGSPCTGEITFYDGGLGACGTNIDTNGEDAIALPIELMGPLSNNNPYCGKQVQISYKGKTATATVKDKCAGCTGNNIDMTRFLFYKLIRFPVAFTNSSNSGVEADGRIHGVEWHFI</sequence>
<gene>
    <name type="ORF">ARB_02701</name>
</gene>
<dbReference type="EMBL" id="ABSU01000029">
    <property type="protein sequence ID" value="EFE30539.1"/>
    <property type="molecule type" value="Genomic_DNA"/>
</dbReference>
<dbReference type="RefSeq" id="XP_003011179.1">
    <property type="nucleotide sequence ID" value="XM_003011133.1"/>
</dbReference>
<dbReference type="SMR" id="D4B2H3"/>
<dbReference type="STRING" id="663331.D4B2H3"/>
<dbReference type="GeneID" id="9523834"/>
<dbReference type="KEGG" id="abe:ARB_02701"/>
<dbReference type="eggNOG" id="ENOG502S2E4">
    <property type="taxonomic scope" value="Eukaryota"/>
</dbReference>
<dbReference type="HOGENOM" id="CLU_052701_0_0_1"/>
<dbReference type="OMA" id="WETVTDI"/>
<dbReference type="Proteomes" id="UP000008866">
    <property type="component" value="Unassembled WGS sequence"/>
</dbReference>
<dbReference type="GO" id="GO:0005576">
    <property type="term" value="C:extracellular region"/>
    <property type="evidence" value="ECO:0007669"/>
    <property type="project" value="UniProtKB-SubCell"/>
</dbReference>
<dbReference type="CDD" id="cd22191">
    <property type="entry name" value="DPBB_RlpA_EXP_N-like"/>
    <property type="match status" value="1"/>
</dbReference>
<dbReference type="Gene3D" id="2.40.40.10">
    <property type="entry name" value="RlpA-like domain"/>
    <property type="match status" value="1"/>
</dbReference>
<dbReference type="InterPro" id="IPR051477">
    <property type="entry name" value="Expansin_CellWall"/>
</dbReference>
<dbReference type="InterPro" id="IPR036908">
    <property type="entry name" value="RlpA-like_sf"/>
</dbReference>
<dbReference type="PANTHER" id="PTHR31836">
    <property type="match status" value="1"/>
</dbReference>
<dbReference type="PANTHER" id="PTHR31836:SF28">
    <property type="entry name" value="SRCR DOMAIN-CONTAINING PROTEIN-RELATED"/>
    <property type="match status" value="1"/>
</dbReference>
<dbReference type="PRINTS" id="PR01217">
    <property type="entry name" value="PRICHEXTENSN"/>
</dbReference>
<dbReference type="SUPFAM" id="SSF50685">
    <property type="entry name" value="Barwin-like endoglucanases"/>
    <property type="match status" value="1"/>
</dbReference>